<evidence type="ECO:0000255" key="1">
    <source>
        <dbReference type="HAMAP-Rule" id="MF_00394"/>
    </source>
</evidence>
<keyword id="KW-0963">Cytoplasm</keyword>
<keyword id="KW-0444">Lipid biosynthesis</keyword>
<keyword id="KW-0443">Lipid metabolism</keyword>
<keyword id="KW-0520">NAD</keyword>
<keyword id="KW-0521">NADP</keyword>
<keyword id="KW-0547">Nucleotide-binding</keyword>
<keyword id="KW-0560">Oxidoreductase</keyword>
<keyword id="KW-0594">Phospholipid biosynthesis</keyword>
<keyword id="KW-1208">Phospholipid metabolism</keyword>
<dbReference type="EC" id="1.1.1.94" evidence="1"/>
<dbReference type="EMBL" id="CP000903">
    <property type="protein sequence ID" value="ABY42676.1"/>
    <property type="molecule type" value="Genomic_DNA"/>
</dbReference>
<dbReference type="RefSeq" id="WP_012260631.1">
    <property type="nucleotide sequence ID" value="NC_010184.1"/>
</dbReference>
<dbReference type="SMR" id="A9VMB4"/>
<dbReference type="KEGG" id="bwe:BcerKBAB4_1429"/>
<dbReference type="eggNOG" id="COG0240">
    <property type="taxonomic scope" value="Bacteria"/>
</dbReference>
<dbReference type="HOGENOM" id="CLU_033449_0_2_9"/>
<dbReference type="UniPathway" id="UPA00940"/>
<dbReference type="Proteomes" id="UP000002154">
    <property type="component" value="Chromosome"/>
</dbReference>
<dbReference type="GO" id="GO:0005829">
    <property type="term" value="C:cytosol"/>
    <property type="evidence" value="ECO:0007669"/>
    <property type="project" value="TreeGrafter"/>
</dbReference>
<dbReference type="GO" id="GO:0047952">
    <property type="term" value="F:glycerol-3-phosphate dehydrogenase [NAD(P)+] activity"/>
    <property type="evidence" value="ECO:0007669"/>
    <property type="project" value="UniProtKB-UniRule"/>
</dbReference>
<dbReference type="GO" id="GO:0051287">
    <property type="term" value="F:NAD binding"/>
    <property type="evidence" value="ECO:0007669"/>
    <property type="project" value="InterPro"/>
</dbReference>
<dbReference type="GO" id="GO:0005975">
    <property type="term" value="P:carbohydrate metabolic process"/>
    <property type="evidence" value="ECO:0007669"/>
    <property type="project" value="InterPro"/>
</dbReference>
<dbReference type="GO" id="GO:0046167">
    <property type="term" value="P:glycerol-3-phosphate biosynthetic process"/>
    <property type="evidence" value="ECO:0007669"/>
    <property type="project" value="UniProtKB-UniRule"/>
</dbReference>
<dbReference type="GO" id="GO:0046168">
    <property type="term" value="P:glycerol-3-phosphate catabolic process"/>
    <property type="evidence" value="ECO:0007669"/>
    <property type="project" value="InterPro"/>
</dbReference>
<dbReference type="GO" id="GO:0006650">
    <property type="term" value="P:glycerophospholipid metabolic process"/>
    <property type="evidence" value="ECO:0007669"/>
    <property type="project" value="UniProtKB-UniRule"/>
</dbReference>
<dbReference type="GO" id="GO:0008654">
    <property type="term" value="P:phospholipid biosynthetic process"/>
    <property type="evidence" value="ECO:0007669"/>
    <property type="project" value="UniProtKB-KW"/>
</dbReference>
<dbReference type="FunFam" id="1.10.1040.10:FF:000001">
    <property type="entry name" value="Glycerol-3-phosphate dehydrogenase [NAD(P)+]"/>
    <property type="match status" value="1"/>
</dbReference>
<dbReference type="FunFam" id="3.40.50.720:FF:000019">
    <property type="entry name" value="Glycerol-3-phosphate dehydrogenase [NAD(P)+]"/>
    <property type="match status" value="1"/>
</dbReference>
<dbReference type="Gene3D" id="1.10.1040.10">
    <property type="entry name" value="N-(1-d-carboxylethyl)-l-norvaline Dehydrogenase, domain 2"/>
    <property type="match status" value="1"/>
</dbReference>
<dbReference type="Gene3D" id="3.40.50.720">
    <property type="entry name" value="NAD(P)-binding Rossmann-like Domain"/>
    <property type="match status" value="1"/>
</dbReference>
<dbReference type="HAMAP" id="MF_00394">
    <property type="entry name" value="NAD_Glyc3P_dehydrog"/>
    <property type="match status" value="1"/>
</dbReference>
<dbReference type="InterPro" id="IPR008927">
    <property type="entry name" value="6-PGluconate_DH-like_C_sf"/>
</dbReference>
<dbReference type="InterPro" id="IPR013328">
    <property type="entry name" value="6PGD_dom2"/>
</dbReference>
<dbReference type="InterPro" id="IPR006168">
    <property type="entry name" value="G3P_DH_NAD-dep"/>
</dbReference>
<dbReference type="InterPro" id="IPR006109">
    <property type="entry name" value="G3P_DH_NAD-dep_C"/>
</dbReference>
<dbReference type="InterPro" id="IPR011128">
    <property type="entry name" value="G3P_DH_NAD-dep_N"/>
</dbReference>
<dbReference type="InterPro" id="IPR036291">
    <property type="entry name" value="NAD(P)-bd_dom_sf"/>
</dbReference>
<dbReference type="NCBIfam" id="NF000940">
    <property type="entry name" value="PRK00094.1-2"/>
    <property type="match status" value="1"/>
</dbReference>
<dbReference type="NCBIfam" id="NF000941">
    <property type="entry name" value="PRK00094.1-3"/>
    <property type="match status" value="1"/>
</dbReference>
<dbReference type="NCBIfam" id="NF000942">
    <property type="entry name" value="PRK00094.1-4"/>
    <property type="match status" value="1"/>
</dbReference>
<dbReference type="PANTHER" id="PTHR11728">
    <property type="entry name" value="GLYCEROL-3-PHOSPHATE DEHYDROGENASE"/>
    <property type="match status" value="1"/>
</dbReference>
<dbReference type="PANTHER" id="PTHR11728:SF1">
    <property type="entry name" value="GLYCEROL-3-PHOSPHATE DEHYDROGENASE [NAD(+)] 2, CHLOROPLASTIC"/>
    <property type="match status" value="1"/>
</dbReference>
<dbReference type="Pfam" id="PF07479">
    <property type="entry name" value="NAD_Gly3P_dh_C"/>
    <property type="match status" value="1"/>
</dbReference>
<dbReference type="Pfam" id="PF01210">
    <property type="entry name" value="NAD_Gly3P_dh_N"/>
    <property type="match status" value="1"/>
</dbReference>
<dbReference type="PIRSF" id="PIRSF000114">
    <property type="entry name" value="Glycerol-3-P_dh"/>
    <property type="match status" value="1"/>
</dbReference>
<dbReference type="PRINTS" id="PR00077">
    <property type="entry name" value="GPDHDRGNASE"/>
</dbReference>
<dbReference type="SUPFAM" id="SSF48179">
    <property type="entry name" value="6-phosphogluconate dehydrogenase C-terminal domain-like"/>
    <property type="match status" value="1"/>
</dbReference>
<dbReference type="SUPFAM" id="SSF51735">
    <property type="entry name" value="NAD(P)-binding Rossmann-fold domains"/>
    <property type="match status" value="1"/>
</dbReference>
<dbReference type="PROSITE" id="PS00957">
    <property type="entry name" value="NAD_G3PDH"/>
    <property type="match status" value="1"/>
</dbReference>
<sequence>MTKITVIGAGSWGTALAMVLADNGHDVRIWGNRPELMNEINTKRENSRYLPGITLPSTIVAYSSLEEALVDVNTVLLVVPTKAYRDVLQEMKEIVTEPITWIHASKGIEPGTSKRISEVIEEEIPESLIKDVVVLSGPSHAEEVGLHQATTVTSAAKRMEAAEGVQDLFMNSYFRVYTNPDIVGVELGGALKNIIALAAGISDGLGLGDNAKAALMTRGLTEIARLGRKMGGNPLTFAGLTGMGDLIVTCTSVHSRNWRAGNMLGKGHSLEEVLESMGMVVEGVRTTKAAHELAEKMEVEMPITAALYDVLFNGNNVKDAVGSLMGRVRKHEVEAIPDLL</sequence>
<organism>
    <name type="scientific">Bacillus mycoides (strain KBAB4)</name>
    <name type="common">Bacillus weihenstephanensis</name>
    <dbReference type="NCBI Taxonomy" id="315730"/>
    <lineage>
        <taxon>Bacteria</taxon>
        <taxon>Bacillati</taxon>
        <taxon>Bacillota</taxon>
        <taxon>Bacilli</taxon>
        <taxon>Bacillales</taxon>
        <taxon>Bacillaceae</taxon>
        <taxon>Bacillus</taxon>
        <taxon>Bacillus cereus group</taxon>
    </lineage>
</organism>
<proteinExistence type="inferred from homology"/>
<protein>
    <recommendedName>
        <fullName evidence="1">Glycerol-3-phosphate dehydrogenase [NAD(P)+]</fullName>
        <ecNumber evidence="1">1.1.1.94</ecNumber>
    </recommendedName>
    <alternativeName>
        <fullName evidence="1">NAD(P)(+)-dependent glycerol-3-phosphate dehydrogenase</fullName>
    </alternativeName>
    <alternativeName>
        <fullName evidence="1">NAD(P)H-dependent dihydroxyacetone-phosphate reductase</fullName>
    </alternativeName>
</protein>
<reference key="1">
    <citation type="journal article" date="2008" name="Chem. Biol. Interact.">
        <title>Extending the Bacillus cereus group genomics to putative food-borne pathogens of different toxicity.</title>
        <authorList>
            <person name="Lapidus A."/>
            <person name="Goltsman E."/>
            <person name="Auger S."/>
            <person name="Galleron N."/>
            <person name="Segurens B."/>
            <person name="Dossat C."/>
            <person name="Land M.L."/>
            <person name="Broussolle V."/>
            <person name="Brillard J."/>
            <person name="Guinebretiere M.-H."/>
            <person name="Sanchis V."/>
            <person name="Nguen-the C."/>
            <person name="Lereclus D."/>
            <person name="Richardson P."/>
            <person name="Wincker P."/>
            <person name="Weissenbach J."/>
            <person name="Ehrlich S.D."/>
            <person name="Sorokin A."/>
        </authorList>
    </citation>
    <scope>NUCLEOTIDE SEQUENCE [LARGE SCALE GENOMIC DNA]</scope>
    <source>
        <strain>KBAB4</strain>
    </source>
</reference>
<gene>
    <name evidence="1" type="primary">gpsA</name>
    <name type="ordered locus">BcerKBAB4_1429</name>
</gene>
<feature type="chain" id="PRO_1000123120" description="Glycerol-3-phosphate dehydrogenase [NAD(P)+]">
    <location>
        <begin position="1"/>
        <end position="340"/>
    </location>
</feature>
<feature type="active site" description="Proton acceptor" evidence="1">
    <location>
        <position position="192"/>
    </location>
</feature>
<feature type="binding site" evidence="1">
    <location>
        <position position="11"/>
    </location>
    <ligand>
        <name>NADPH</name>
        <dbReference type="ChEBI" id="CHEBI:57783"/>
    </ligand>
</feature>
<feature type="binding site" evidence="1">
    <location>
        <position position="12"/>
    </location>
    <ligand>
        <name>NADPH</name>
        <dbReference type="ChEBI" id="CHEBI:57783"/>
    </ligand>
</feature>
<feature type="binding site" evidence="1">
    <location>
        <position position="33"/>
    </location>
    <ligand>
        <name>NADPH</name>
        <dbReference type="ChEBI" id="CHEBI:57783"/>
    </ligand>
</feature>
<feature type="binding site" evidence="1">
    <location>
        <position position="106"/>
    </location>
    <ligand>
        <name>NADPH</name>
        <dbReference type="ChEBI" id="CHEBI:57783"/>
    </ligand>
</feature>
<feature type="binding site" evidence="1">
    <location>
        <position position="106"/>
    </location>
    <ligand>
        <name>sn-glycerol 3-phosphate</name>
        <dbReference type="ChEBI" id="CHEBI:57597"/>
    </ligand>
</feature>
<feature type="binding site" evidence="1">
    <location>
        <position position="137"/>
    </location>
    <ligand>
        <name>sn-glycerol 3-phosphate</name>
        <dbReference type="ChEBI" id="CHEBI:57597"/>
    </ligand>
</feature>
<feature type="binding site" evidence="1">
    <location>
        <position position="139"/>
    </location>
    <ligand>
        <name>sn-glycerol 3-phosphate</name>
        <dbReference type="ChEBI" id="CHEBI:57597"/>
    </ligand>
</feature>
<feature type="binding site" evidence="1">
    <location>
        <position position="141"/>
    </location>
    <ligand>
        <name>NADPH</name>
        <dbReference type="ChEBI" id="CHEBI:57783"/>
    </ligand>
</feature>
<feature type="binding site" evidence="1">
    <location>
        <position position="192"/>
    </location>
    <ligand>
        <name>sn-glycerol 3-phosphate</name>
        <dbReference type="ChEBI" id="CHEBI:57597"/>
    </ligand>
</feature>
<feature type="binding site" evidence="1">
    <location>
        <position position="245"/>
    </location>
    <ligand>
        <name>sn-glycerol 3-phosphate</name>
        <dbReference type="ChEBI" id="CHEBI:57597"/>
    </ligand>
</feature>
<feature type="binding site" evidence="1">
    <location>
        <position position="255"/>
    </location>
    <ligand>
        <name>sn-glycerol 3-phosphate</name>
        <dbReference type="ChEBI" id="CHEBI:57597"/>
    </ligand>
</feature>
<feature type="binding site" evidence="1">
    <location>
        <position position="256"/>
    </location>
    <ligand>
        <name>NADPH</name>
        <dbReference type="ChEBI" id="CHEBI:57783"/>
    </ligand>
</feature>
<feature type="binding site" evidence="1">
    <location>
        <position position="256"/>
    </location>
    <ligand>
        <name>sn-glycerol 3-phosphate</name>
        <dbReference type="ChEBI" id="CHEBI:57597"/>
    </ligand>
</feature>
<feature type="binding site" evidence="1">
    <location>
        <position position="257"/>
    </location>
    <ligand>
        <name>sn-glycerol 3-phosphate</name>
        <dbReference type="ChEBI" id="CHEBI:57597"/>
    </ligand>
</feature>
<feature type="binding site" evidence="1">
    <location>
        <position position="280"/>
    </location>
    <ligand>
        <name>NADPH</name>
        <dbReference type="ChEBI" id="CHEBI:57783"/>
    </ligand>
</feature>
<feature type="binding site" evidence="1">
    <location>
        <position position="282"/>
    </location>
    <ligand>
        <name>NADPH</name>
        <dbReference type="ChEBI" id="CHEBI:57783"/>
    </ligand>
</feature>
<accession>A9VMB4</accession>
<comment type="function">
    <text evidence="1">Catalyzes the reduction of the glycolytic intermediate dihydroxyacetone phosphate (DHAP) to sn-glycerol 3-phosphate (G3P), the key precursor for phospholipid synthesis.</text>
</comment>
<comment type="catalytic activity">
    <reaction evidence="1">
        <text>sn-glycerol 3-phosphate + NAD(+) = dihydroxyacetone phosphate + NADH + H(+)</text>
        <dbReference type="Rhea" id="RHEA:11092"/>
        <dbReference type="ChEBI" id="CHEBI:15378"/>
        <dbReference type="ChEBI" id="CHEBI:57540"/>
        <dbReference type="ChEBI" id="CHEBI:57597"/>
        <dbReference type="ChEBI" id="CHEBI:57642"/>
        <dbReference type="ChEBI" id="CHEBI:57945"/>
        <dbReference type="EC" id="1.1.1.94"/>
    </reaction>
    <physiologicalReaction direction="right-to-left" evidence="1">
        <dbReference type="Rhea" id="RHEA:11094"/>
    </physiologicalReaction>
</comment>
<comment type="catalytic activity">
    <reaction evidence="1">
        <text>sn-glycerol 3-phosphate + NADP(+) = dihydroxyacetone phosphate + NADPH + H(+)</text>
        <dbReference type="Rhea" id="RHEA:11096"/>
        <dbReference type="ChEBI" id="CHEBI:15378"/>
        <dbReference type="ChEBI" id="CHEBI:57597"/>
        <dbReference type="ChEBI" id="CHEBI:57642"/>
        <dbReference type="ChEBI" id="CHEBI:57783"/>
        <dbReference type="ChEBI" id="CHEBI:58349"/>
        <dbReference type="EC" id="1.1.1.94"/>
    </reaction>
    <physiologicalReaction direction="right-to-left" evidence="1">
        <dbReference type="Rhea" id="RHEA:11098"/>
    </physiologicalReaction>
</comment>
<comment type="pathway">
    <text evidence="1">Membrane lipid metabolism; glycerophospholipid metabolism.</text>
</comment>
<comment type="subcellular location">
    <subcellularLocation>
        <location evidence="1">Cytoplasm</location>
    </subcellularLocation>
</comment>
<comment type="similarity">
    <text evidence="1">Belongs to the NAD-dependent glycerol-3-phosphate dehydrogenase family.</text>
</comment>
<name>GPDA_BACMK</name>